<proteinExistence type="inferred from homology"/>
<gene>
    <name evidence="1" type="primary">apaH</name>
    <name type="ordered locus">XOO3750</name>
</gene>
<name>APAH_XANOR</name>
<feature type="chain" id="PRO_1000012107" description="Bis(5'-nucleosyl)-tetraphosphatase, symmetrical">
    <location>
        <begin position="1"/>
        <end position="318"/>
    </location>
</feature>
<feature type="region of interest" description="Disordered" evidence="2">
    <location>
        <begin position="269"/>
        <end position="318"/>
    </location>
</feature>
<feature type="compositionally biased region" description="Basic residues" evidence="2">
    <location>
        <begin position="282"/>
        <end position="297"/>
    </location>
</feature>
<dbReference type="EC" id="3.6.1.41" evidence="1"/>
<dbReference type="EMBL" id="AE013598">
    <property type="protein sequence ID" value="AAW77004.1"/>
    <property type="molecule type" value="Genomic_DNA"/>
</dbReference>
<dbReference type="SMR" id="Q5GWB7"/>
<dbReference type="STRING" id="291331.XOO3750"/>
<dbReference type="KEGG" id="xoo:XOO3750"/>
<dbReference type="HOGENOM" id="CLU_056184_0_0_6"/>
<dbReference type="Proteomes" id="UP000006735">
    <property type="component" value="Chromosome"/>
</dbReference>
<dbReference type="GO" id="GO:0008803">
    <property type="term" value="F:bis(5'-nucleosyl)-tetraphosphatase (symmetrical) activity"/>
    <property type="evidence" value="ECO:0007669"/>
    <property type="project" value="UniProtKB-UniRule"/>
</dbReference>
<dbReference type="CDD" id="cd07422">
    <property type="entry name" value="MPP_ApaH"/>
    <property type="match status" value="1"/>
</dbReference>
<dbReference type="Gene3D" id="3.60.21.10">
    <property type="match status" value="1"/>
</dbReference>
<dbReference type="HAMAP" id="MF_00199">
    <property type="entry name" value="ApaH"/>
    <property type="match status" value="1"/>
</dbReference>
<dbReference type="InterPro" id="IPR004617">
    <property type="entry name" value="ApaH"/>
</dbReference>
<dbReference type="InterPro" id="IPR004843">
    <property type="entry name" value="Calcineurin-like_PHP_ApaH"/>
</dbReference>
<dbReference type="InterPro" id="IPR029052">
    <property type="entry name" value="Metallo-depent_PP-like"/>
</dbReference>
<dbReference type="InterPro" id="IPR006186">
    <property type="entry name" value="Ser/Thr-sp_prot-phosphatase"/>
</dbReference>
<dbReference type="NCBIfam" id="TIGR00668">
    <property type="entry name" value="apaH"/>
    <property type="match status" value="1"/>
</dbReference>
<dbReference type="NCBIfam" id="NF001204">
    <property type="entry name" value="PRK00166.1"/>
    <property type="match status" value="1"/>
</dbReference>
<dbReference type="PANTHER" id="PTHR40942">
    <property type="match status" value="1"/>
</dbReference>
<dbReference type="PANTHER" id="PTHR40942:SF4">
    <property type="entry name" value="CYTOCHROME C5"/>
    <property type="match status" value="1"/>
</dbReference>
<dbReference type="Pfam" id="PF00149">
    <property type="entry name" value="Metallophos"/>
    <property type="match status" value="1"/>
</dbReference>
<dbReference type="PIRSF" id="PIRSF000903">
    <property type="entry name" value="B5n-ttraPtase_sm"/>
    <property type="match status" value="1"/>
</dbReference>
<dbReference type="PRINTS" id="PR00114">
    <property type="entry name" value="STPHPHTASE"/>
</dbReference>
<dbReference type="SUPFAM" id="SSF56300">
    <property type="entry name" value="Metallo-dependent phosphatases"/>
    <property type="match status" value="1"/>
</dbReference>
<protein>
    <recommendedName>
        <fullName evidence="1">Bis(5'-nucleosyl)-tetraphosphatase, symmetrical</fullName>
        <ecNumber evidence="1">3.6.1.41</ecNumber>
    </recommendedName>
    <alternativeName>
        <fullName evidence="1">Ap4A hydrolase</fullName>
    </alternativeName>
    <alternativeName>
        <fullName evidence="1">Diadenosine 5',5'''-P1,P4-tetraphosphate pyrophosphohydrolase</fullName>
    </alternativeName>
    <alternativeName>
        <fullName evidence="1">Diadenosine tetraphosphatase</fullName>
    </alternativeName>
</protein>
<sequence length="318" mass="35454">MSVWAIGDLQGCYDITQRLLEKINFDPAQDTLWFCGDLVNRGGQSLETLRLVHSLRAHSVVVLGNHDLSLLAIGARSEEEQRKVNPDLLRIVLAEDRDALLDWLRMQKLAHVDRALGWMMIHAGLAPKWTTQMAEKHAREVEQQLQGGGYRKLLRNMYGDQPGWSPGLIGYDRSRAIINLFTRMRYCTPRGRIATDDKGTPGTQAQGLYPWFEVPGRVERDLKIVCGHWSALGLTITQGVHAIDTGAVWGGKLTALQLDTDELRVVQVPGREVTGPAPVARAPRRPRERLGRQRSRGNRGNAGNTAVPAKPQVDTPQD</sequence>
<evidence type="ECO:0000255" key="1">
    <source>
        <dbReference type="HAMAP-Rule" id="MF_00199"/>
    </source>
</evidence>
<evidence type="ECO:0000256" key="2">
    <source>
        <dbReference type="SAM" id="MobiDB-lite"/>
    </source>
</evidence>
<reference key="1">
    <citation type="journal article" date="2005" name="Nucleic Acids Res.">
        <title>The genome sequence of Xanthomonas oryzae pathovar oryzae KACC10331, the bacterial blight pathogen of rice.</title>
        <authorList>
            <person name="Lee B.-M."/>
            <person name="Park Y.-J."/>
            <person name="Park D.-S."/>
            <person name="Kang H.-W."/>
            <person name="Kim J.-G."/>
            <person name="Song E.-S."/>
            <person name="Park I.-C."/>
            <person name="Yoon U.-H."/>
            <person name="Hahn J.-H."/>
            <person name="Koo B.-S."/>
            <person name="Lee G.-B."/>
            <person name="Kim H."/>
            <person name="Park H.-S."/>
            <person name="Yoon K.-O."/>
            <person name="Kim J.-H."/>
            <person name="Jung C.-H."/>
            <person name="Koh N.-H."/>
            <person name="Seo J.-S."/>
            <person name="Go S.-J."/>
        </authorList>
    </citation>
    <scope>NUCLEOTIDE SEQUENCE [LARGE SCALE GENOMIC DNA]</scope>
    <source>
        <strain>KACC10331 / KXO85</strain>
    </source>
</reference>
<organism>
    <name type="scientific">Xanthomonas oryzae pv. oryzae (strain KACC10331 / KXO85)</name>
    <dbReference type="NCBI Taxonomy" id="291331"/>
    <lineage>
        <taxon>Bacteria</taxon>
        <taxon>Pseudomonadati</taxon>
        <taxon>Pseudomonadota</taxon>
        <taxon>Gammaproteobacteria</taxon>
        <taxon>Lysobacterales</taxon>
        <taxon>Lysobacteraceae</taxon>
        <taxon>Xanthomonas</taxon>
    </lineage>
</organism>
<comment type="function">
    <text evidence="1">Hydrolyzes diadenosine 5',5'''-P1,P4-tetraphosphate to yield ADP.</text>
</comment>
<comment type="catalytic activity">
    <reaction evidence="1">
        <text>P(1),P(4)-bis(5'-adenosyl) tetraphosphate + H2O = 2 ADP + 2 H(+)</text>
        <dbReference type="Rhea" id="RHEA:24252"/>
        <dbReference type="ChEBI" id="CHEBI:15377"/>
        <dbReference type="ChEBI" id="CHEBI:15378"/>
        <dbReference type="ChEBI" id="CHEBI:58141"/>
        <dbReference type="ChEBI" id="CHEBI:456216"/>
        <dbReference type="EC" id="3.6.1.41"/>
    </reaction>
</comment>
<comment type="similarity">
    <text evidence="1">Belongs to the Ap4A hydrolase family.</text>
</comment>
<accession>Q5GWB7</accession>
<keyword id="KW-0378">Hydrolase</keyword>
<keyword id="KW-1185">Reference proteome</keyword>